<proteinExistence type="inferred from homology"/>
<gene>
    <name evidence="1" type="primary">trpA</name>
    <name type="ordered locus">ACIAD0642</name>
</gene>
<comment type="function">
    <text evidence="1">The alpha subunit is responsible for the aldol cleavage of indoleglycerol phosphate to indole and glyceraldehyde 3-phosphate.</text>
</comment>
<comment type="catalytic activity">
    <reaction evidence="1">
        <text>(1S,2R)-1-C-(indol-3-yl)glycerol 3-phosphate + L-serine = D-glyceraldehyde 3-phosphate + L-tryptophan + H2O</text>
        <dbReference type="Rhea" id="RHEA:10532"/>
        <dbReference type="ChEBI" id="CHEBI:15377"/>
        <dbReference type="ChEBI" id="CHEBI:33384"/>
        <dbReference type="ChEBI" id="CHEBI:57912"/>
        <dbReference type="ChEBI" id="CHEBI:58866"/>
        <dbReference type="ChEBI" id="CHEBI:59776"/>
        <dbReference type="EC" id="4.2.1.20"/>
    </reaction>
</comment>
<comment type="pathway">
    <text evidence="1">Amino-acid biosynthesis; L-tryptophan biosynthesis; L-tryptophan from chorismate: step 5/5.</text>
</comment>
<comment type="subunit">
    <text evidence="1">Tetramer of two alpha and two beta chains.</text>
</comment>
<comment type="similarity">
    <text evidence="1">Belongs to the TrpA family.</text>
</comment>
<evidence type="ECO:0000255" key="1">
    <source>
        <dbReference type="HAMAP-Rule" id="MF_00131"/>
    </source>
</evidence>
<organism>
    <name type="scientific">Acinetobacter baylyi (strain ATCC 33305 / BD413 / ADP1)</name>
    <dbReference type="NCBI Taxonomy" id="62977"/>
    <lineage>
        <taxon>Bacteria</taxon>
        <taxon>Pseudomonadati</taxon>
        <taxon>Pseudomonadota</taxon>
        <taxon>Gammaproteobacteria</taxon>
        <taxon>Moraxellales</taxon>
        <taxon>Moraxellaceae</taxon>
        <taxon>Acinetobacter</taxon>
    </lineage>
</organism>
<reference key="1">
    <citation type="journal article" date="2004" name="Nucleic Acids Res.">
        <title>Unique features revealed by the genome sequence of Acinetobacter sp. ADP1, a versatile and naturally transformation competent bacterium.</title>
        <authorList>
            <person name="Barbe V."/>
            <person name="Vallenet D."/>
            <person name="Fonknechten N."/>
            <person name="Kreimeyer A."/>
            <person name="Oztas S."/>
            <person name="Labarre L."/>
            <person name="Cruveiller S."/>
            <person name="Robert C."/>
            <person name="Duprat S."/>
            <person name="Wincker P."/>
            <person name="Ornston L.N."/>
            <person name="Weissenbach J."/>
            <person name="Marliere P."/>
            <person name="Cohen G.N."/>
            <person name="Medigue C."/>
        </authorList>
    </citation>
    <scope>NUCLEOTIDE SEQUENCE [LARGE SCALE GENOMIC DNA]</scope>
    <source>
        <strain>ATCC 33305 / BD413 / ADP1</strain>
    </source>
</reference>
<feature type="chain" id="PRO_0000098727" description="Tryptophan synthase alpha chain">
    <location>
        <begin position="1"/>
        <end position="267"/>
    </location>
</feature>
<feature type="active site" description="Proton acceptor" evidence="1">
    <location>
        <position position="49"/>
    </location>
</feature>
<feature type="active site" description="Proton acceptor" evidence="1">
    <location>
        <position position="60"/>
    </location>
</feature>
<sequence>MSRLATRFEQLKSQQRKALVSYVMAGDPQPQVSVPLLHKMVEAGVDVIELGLPFSDPMADGPVIALAAERALAAGTNTLDALNMVKEFRQNDSETPVVLMGYLNPVEVIGYEKFVSHAKACGVDGVLLVDLPPEEAKEFDVVLKQHDMDQIFLLAPTSTDQRIEHVVKQASGFIYYVSLKGVTGAATLDVTEAAERIAKIKTKTSVPVGVGFGISDAASAKAMGQVADAVIVGSAFVKPFATLAIDQAVEQTVNKVKELRAALDELV</sequence>
<keyword id="KW-0028">Amino-acid biosynthesis</keyword>
<keyword id="KW-0057">Aromatic amino acid biosynthesis</keyword>
<keyword id="KW-0456">Lyase</keyword>
<keyword id="KW-0822">Tryptophan biosynthesis</keyword>
<name>TRPA_ACIAD</name>
<accession>Q6FEE6</accession>
<dbReference type="EC" id="4.2.1.20" evidence="1"/>
<dbReference type="EMBL" id="CR543861">
    <property type="protein sequence ID" value="CAG67562.1"/>
    <property type="molecule type" value="Genomic_DNA"/>
</dbReference>
<dbReference type="RefSeq" id="WP_004919789.1">
    <property type="nucleotide sequence ID" value="NC_005966.1"/>
</dbReference>
<dbReference type="SMR" id="Q6FEE6"/>
<dbReference type="STRING" id="202950.GCA_001485005_00874"/>
<dbReference type="GeneID" id="45233114"/>
<dbReference type="KEGG" id="aci:ACIAD0642"/>
<dbReference type="eggNOG" id="COG0159">
    <property type="taxonomic scope" value="Bacteria"/>
</dbReference>
<dbReference type="HOGENOM" id="CLU_016734_0_0_6"/>
<dbReference type="OrthoDB" id="9804578at2"/>
<dbReference type="BioCyc" id="ASP62977:ACIAD_RS02930-MONOMER"/>
<dbReference type="UniPathway" id="UPA00035">
    <property type="reaction ID" value="UER00044"/>
</dbReference>
<dbReference type="Proteomes" id="UP000000430">
    <property type="component" value="Chromosome"/>
</dbReference>
<dbReference type="GO" id="GO:0005829">
    <property type="term" value="C:cytosol"/>
    <property type="evidence" value="ECO:0007669"/>
    <property type="project" value="TreeGrafter"/>
</dbReference>
<dbReference type="GO" id="GO:0004834">
    <property type="term" value="F:tryptophan synthase activity"/>
    <property type="evidence" value="ECO:0007669"/>
    <property type="project" value="UniProtKB-UniRule"/>
</dbReference>
<dbReference type="CDD" id="cd04724">
    <property type="entry name" value="Tryptophan_synthase_alpha"/>
    <property type="match status" value="1"/>
</dbReference>
<dbReference type="FunFam" id="3.20.20.70:FF:000037">
    <property type="entry name" value="Tryptophan synthase alpha chain"/>
    <property type="match status" value="1"/>
</dbReference>
<dbReference type="Gene3D" id="3.20.20.70">
    <property type="entry name" value="Aldolase class I"/>
    <property type="match status" value="1"/>
</dbReference>
<dbReference type="HAMAP" id="MF_00131">
    <property type="entry name" value="Trp_synth_alpha"/>
    <property type="match status" value="1"/>
</dbReference>
<dbReference type="InterPro" id="IPR013785">
    <property type="entry name" value="Aldolase_TIM"/>
</dbReference>
<dbReference type="InterPro" id="IPR011060">
    <property type="entry name" value="RibuloseP-bd_barrel"/>
</dbReference>
<dbReference type="InterPro" id="IPR018204">
    <property type="entry name" value="Trp_synthase_alpha_AS"/>
</dbReference>
<dbReference type="InterPro" id="IPR002028">
    <property type="entry name" value="Trp_synthase_suA"/>
</dbReference>
<dbReference type="NCBIfam" id="TIGR00262">
    <property type="entry name" value="trpA"/>
    <property type="match status" value="1"/>
</dbReference>
<dbReference type="PANTHER" id="PTHR43406:SF1">
    <property type="entry name" value="TRYPTOPHAN SYNTHASE ALPHA CHAIN, CHLOROPLASTIC"/>
    <property type="match status" value="1"/>
</dbReference>
<dbReference type="PANTHER" id="PTHR43406">
    <property type="entry name" value="TRYPTOPHAN SYNTHASE, ALPHA CHAIN"/>
    <property type="match status" value="1"/>
</dbReference>
<dbReference type="Pfam" id="PF00290">
    <property type="entry name" value="Trp_syntA"/>
    <property type="match status" value="1"/>
</dbReference>
<dbReference type="SUPFAM" id="SSF51366">
    <property type="entry name" value="Ribulose-phoshate binding barrel"/>
    <property type="match status" value="1"/>
</dbReference>
<dbReference type="PROSITE" id="PS00167">
    <property type="entry name" value="TRP_SYNTHASE_ALPHA"/>
    <property type="match status" value="1"/>
</dbReference>
<protein>
    <recommendedName>
        <fullName evidence="1">Tryptophan synthase alpha chain</fullName>
        <ecNumber evidence="1">4.2.1.20</ecNumber>
    </recommendedName>
</protein>